<reference key="1">
    <citation type="submission" date="2008-01" db="EMBL/GenBank/DDBJ databases">
        <title>Complete sequence of Shewanella halifaxensis HAW-EB4.</title>
        <authorList>
            <consortium name="US DOE Joint Genome Institute"/>
            <person name="Copeland A."/>
            <person name="Lucas S."/>
            <person name="Lapidus A."/>
            <person name="Glavina del Rio T."/>
            <person name="Dalin E."/>
            <person name="Tice H."/>
            <person name="Bruce D."/>
            <person name="Goodwin L."/>
            <person name="Pitluck S."/>
            <person name="Sims D."/>
            <person name="Brettin T."/>
            <person name="Detter J.C."/>
            <person name="Han C."/>
            <person name="Kuske C.R."/>
            <person name="Schmutz J."/>
            <person name="Larimer F."/>
            <person name="Land M."/>
            <person name="Hauser L."/>
            <person name="Kyrpides N."/>
            <person name="Kim E."/>
            <person name="Zhao J.-S."/>
            <person name="Richardson P."/>
        </authorList>
    </citation>
    <scope>NUCLEOTIDE SEQUENCE [LARGE SCALE GENOMIC DNA]</scope>
    <source>
        <strain>HAW-EB4</strain>
    </source>
</reference>
<keyword id="KW-0131">Cell cycle</keyword>
<keyword id="KW-0132">Cell division</keyword>
<keyword id="KW-0717">Septation</keyword>
<protein>
    <recommendedName>
        <fullName evidence="1">Probable septum site-determining protein MinC</fullName>
    </recommendedName>
</protein>
<proteinExistence type="inferred from homology"/>
<feature type="chain" id="PRO_1000078657" description="Probable septum site-determining protein MinC">
    <location>
        <begin position="1"/>
        <end position="221"/>
    </location>
</feature>
<gene>
    <name evidence="1" type="primary">minC</name>
    <name type="ordered locus">Shal_1836</name>
</gene>
<dbReference type="EMBL" id="CP000931">
    <property type="protein sequence ID" value="ABZ76401.1"/>
    <property type="molecule type" value="Genomic_DNA"/>
</dbReference>
<dbReference type="RefSeq" id="WP_012276933.1">
    <property type="nucleotide sequence ID" value="NC_010334.1"/>
</dbReference>
<dbReference type="SMR" id="B0TRI3"/>
<dbReference type="STRING" id="458817.Shal_1836"/>
<dbReference type="KEGG" id="shl:Shal_1836"/>
<dbReference type="eggNOG" id="COG0850">
    <property type="taxonomic scope" value="Bacteria"/>
</dbReference>
<dbReference type="HOGENOM" id="CLU_067812_0_1_6"/>
<dbReference type="OrthoDB" id="9794530at2"/>
<dbReference type="Proteomes" id="UP000001317">
    <property type="component" value="Chromosome"/>
</dbReference>
<dbReference type="GO" id="GO:0000902">
    <property type="term" value="P:cell morphogenesis"/>
    <property type="evidence" value="ECO:0007669"/>
    <property type="project" value="InterPro"/>
</dbReference>
<dbReference type="GO" id="GO:0000917">
    <property type="term" value="P:division septum assembly"/>
    <property type="evidence" value="ECO:0007669"/>
    <property type="project" value="UniProtKB-KW"/>
</dbReference>
<dbReference type="GO" id="GO:0051302">
    <property type="term" value="P:regulation of cell division"/>
    <property type="evidence" value="ECO:0007669"/>
    <property type="project" value="InterPro"/>
</dbReference>
<dbReference type="GO" id="GO:1901891">
    <property type="term" value="P:regulation of cell septum assembly"/>
    <property type="evidence" value="ECO:0007669"/>
    <property type="project" value="InterPro"/>
</dbReference>
<dbReference type="Gene3D" id="2.160.20.70">
    <property type="match status" value="1"/>
</dbReference>
<dbReference type="Gene3D" id="3.30.70.260">
    <property type="match status" value="1"/>
</dbReference>
<dbReference type="HAMAP" id="MF_00267">
    <property type="entry name" value="MinC"/>
    <property type="match status" value="1"/>
</dbReference>
<dbReference type="InterPro" id="IPR016098">
    <property type="entry name" value="CAP/MinC_C"/>
</dbReference>
<dbReference type="InterPro" id="IPR013033">
    <property type="entry name" value="MinC"/>
</dbReference>
<dbReference type="InterPro" id="IPR036145">
    <property type="entry name" value="MinC_C_sf"/>
</dbReference>
<dbReference type="InterPro" id="IPR007874">
    <property type="entry name" value="MinC_N"/>
</dbReference>
<dbReference type="InterPro" id="IPR005526">
    <property type="entry name" value="Septum_form_inhib_MinC_C"/>
</dbReference>
<dbReference type="NCBIfam" id="TIGR01222">
    <property type="entry name" value="minC"/>
    <property type="match status" value="1"/>
</dbReference>
<dbReference type="PANTHER" id="PTHR34108">
    <property type="entry name" value="SEPTUM SITE-DETERMINING PROTEIN MINC"/>
    <property type="match status" value="1"/>
</dbReference>
<dbReference type="PANTHER" id="PTHR34108:SF1">
    <property type="entry name" value="SEPTUM SITE-DETERMINING PROTEIN MINC"/>
    <property type="match status" value="1"/>
</dbReference>
<dbReference type="Pfam" id="PF03775">
    <property type="entry name" value="MinC_C"/>
    <property type="match status" value="1"/>
</dbReference>
<dbReference type="Pfam" id="PF05209">
    <property type="entry name" value="MinC_N"/>
    <property type="match status" value="1"/>
</dbReference>
<dbReference type="SUPFAM" id="SSF63848">
    <property type="entry name" value="Cell-division inhibitor MinC, C-terminal domain"/>
    <property type="match status" value="1"/>
</dbReference>
<organism>
    <name type="scientific">Shewanella halifaxensis (strain HAW-EB4)</name>
    <dbReference type="NCBI Taxonomy" id="458817"/>
    <lineage>
        <taxon>Bacteria</taxon>
        <taxon>Pseudomonadati</taxon>
        <taxon>Pseudomonadota</taxon>
        <taxon>Gammaproteobacteria</taxon>
        <taxon>Alteromonadales</taxon>
        <taxon>Shewanellaceae</taxon>
        <taxon>Shewanella</taxon>
    </lineage>
</organism>
<evidence type="ECO:0000255" key="1">
    <source>
        <dbReference type="HAMAP-Rule" id="MF_00267"/>
    </source>
</evidence>
<comment type="function">
    <text evidence="1">Cell division inhibitor that blocks the formation of polar Z ring septums. Rapidly oscillates between the poles of the cell to destabilize FtsZ filaments that have formed before they mature into polar Z rings. Prevents FtsZ polymerization.</text>
</comment>
<comment type="subunit">
    <text evidence="1">Interacts with MinD and FtsZ.</text>
</comment>
<comment type="similarity">
    <text evidence="1">Belongs to the MinC family.</text>
</comment>
<sequence>MQTPSLELKGSSFTLSVLHINSNDMAVIAAELDAKLAIAPQFFLGAPLVVNLSAIQATDFDILGLKEILTNRQLIIVGITSACPELTKQAKSIGLATVKTGKEATSQPQMPKTTKIVKQNVRSGQQIYAKNADLIIVGAVGNGAEVIADGSIHIYGTLRGKAMAGAGGDRHAVIMAQKIEAELVSIAGQYWLTENLQQNGAALSGCIRLEGESLTVESLPL</sequence>
<name>MINC_SHEHH</name>
<accession>B0TRI3</accession>